<evidence type="ECO:0000250" key="1">
    <source>
        <dbReference type="UniProtKB" id="Q9BXS9"/>
    </source>
</evidence>
<evidence type="ECO:0000255" key="2"/>
<evidence type="ECO:0000255" key="3">
    <source>
        <dbReference type="PROSITE-ProRule" id="PRU00198"/>
    </source>
</evidence>
<evidence type="ECO:0000256" key="4">
    <source>
        <dbReference type="SAM" id="MobiDB-lite"/>
    </source>
</evidence>
<evidence type="ECO:0000269" key="5">
    <source>
    </source>
</evidence>
<evidence type="ECO:0000269" key="6">
    <source>
    </source>
</evidence>
<evidence type="ECO:0000269" key="7">
    <source>
    </source>
</evidence>
<evidence type="ECO:0000269" key="8">
    <source>
    </source>
</evidence>
<evidence type="ECO:0000269" key="9">
    <source>
    </source>
</evidence>
<evidence type="ECO:0000269" key="10">
    <source>
    </source>
</evidence>
<evidence type="ECO:0000269" key="11">
    <source>
    </source>
</evidence>
<evidence type="ECO:0000269" key="12">
    <source>
    </source>
</evidence>
<evidence type="ECO:0000269" key="13">
    <source>
    </source>
</evidence>
<evidence type="ECO:0000269" key="14">
    <source>
    </source>
</evidence>
<evidence type="ECO:0000269" key="15">
    <source>
    </source>
</evidence>
<evidence type="ECO:0000269" key="16">
    <source>
    </source>
</evidence>
<evidence type="ECO:0000269" key="17">
    <source>
    </source>
</evidence>
<evidence type="ECO:0000269" key="18">
    <source>
    </source>
</evidence>
<evidence type="ECO:0000269" key="19">
    <source>
    </source>
</evidence>
<evidence type="ECO:0000269" key="20">
    <source>
    </source>
</evidence>
<evidence type="ECO:0000269" key="21">
    <source>
    </source>
</evidence>
<evidence type="ECO:0000269" key="22">
    <source>
    </source>
</evidence>
<evidence type="ECO:0000269" key="23">
    <source>
    </source>
</evidence>
<evidence type="ECO:0000269" key="24">
    <source>
    </source>
</evidence>
<evidence type="ECO:0000269" key="25">
    <source>
    </source>
</evidence>
<evidence type="ECO:0000269" key="26">
    <source>
    </source>
</evidence>
<evidence type="ECO:0000303" key="27">
    <source>
    </source>
</evidence>
<evidence type="ECO:0000303" key="28">
    <source>
    </source>
</evidence>
<evidence type="ECO:0000303" key="29">
    <source>
    </source>
</evidence>
<evidence type="ECO:0000303" key="30">
    <source>
    </source>
</evidence>
<evidence type="ECO:0000303" key="31">
    <source>
    </source>
</evidence>
<evidence type="ECO:0000303" key="32">
    <source>
    </source>
</evidence>
<evidence type="ECO:0000305" key="33"/>
<evidence type="ECO:0000305" key="34">
    <source>
    </source>
</evidence>
<evidence type="ECO:0000312" key="35">
    <source>
        <dbReference type="MGI" id="MGI:2159728"/>
    </source>
</evidence>
<accession>Q8CIW6</accession>
<accession>E9Q4D3</accession>
<accession>Q3TQD3</accession>
<accession>Q812E2</accession>
<accession>Q8CJD0</accession>
<accession>Q8K142</accession>
<accession>Q923J3</accession>
<proteinExistence type="evidence at protein level"/>
<organism>
    <name type="scientific">Mus musculus</name>
    <name type="common">Mouse</name>
    <dbReference type="NCBI Taxonomy" id="10090"/>
    <lineage>
        <taxon>Eukaryota</taxon>
        <taxon>Metazoa</taxon>
        <taxon>Chordata</taxon>
        <taxon>Craniata</taxon>
        <taxon>Vertebrata</taxon>
        <taxon>Euteleostomi</taxon>
        <taxon>Mammalia</taxon>
        <taxon>Eutheria</taxon>
        <taxon>Euarchontoglires</taxon>
        <taxon>Glires</taxon>
        <taxon>Rodentia</taxon>
        <taxon>Myomorpha</taxon>
        <taxon>Muroidea</taxon>
        <taxon>Muridae</taxon>
        <taxon>Murinae</taxon>
        <taxon>Mus</taxon>
        <taxon>Mus</taxon>
    </lineage>
</organism>
<keyword id="KW-0025">Alternative splicing</keyword>
<keyword id="KW-0039">Anion exchange</keyword>
<keyword id="KW-0050">Antiport</keyword>
<keyword id="KW-1003">Cell membrane</keyword>
<keyword id="KW-0868">Chloride</keyword>
<keyword id="KW-0869">Chloride channel</keyword>
<keyword id="KW-0968">Cytoplasmic vesicle</keyword>
<keyword id="KW-0256">Endoplasmic reticulum</keyword>
<keyword id="KW-0325">Glycoprotein</keyword>
<keyword id="KW-0407">Ion channel</keyword>
<keyword id="KW-0406">Ion transport</keyword>
<keyword id="KW-0472">Membrane</keyword>
<keyword id="KW-0492">Microsome</keyword>
<keyword id="KW-0597">Phosphoprotein</keyword>
<keyword id="KW-1185">Reference proteome</keyword>
<keyword id="KW-0812">Transmembrane</keyword>
<keyword id="KW-1133">Transmembrane helix</keyword>
<keyword id="KW-0813">Transport</keyword>
<name>S26A6_MOUSE</name>
<gene>
    <name evidence="35" type="primary">Slc26a6</name>
    <name type="synonym">Cfex</name>
    <name type="synonym">Pat1</name>
</gene>
<protein>
    <recommendedName>
        <fullName>Solute carrier family 26 member 6</fullName>
    </recommendedName>
    <alternativeName>
        <fullName>Anion exchange transporter</fullName>
    </alternativeName>
    <alternativeName>
        <fullName>Chloride-formate exchanger</fullName>
    </alternativeName>
    <alternativeName>
        <fullName>Pendrin-L1</fullName>
    </alternativeName>
    <alternativeName>
        <fullName>Pendrin-like protein 1</fullName>
    </alternativeName>
    <alternativeName>
        <fullName>Putative anion transporter-1</fullName>
        <shortName>Pat-1</shortName>
    </alternativeName>
</protein>
<feature type="chain" id="PRO_0000423423" description="Solute carrier family 26 member 6">
    <location>
        <begin position="1"/>
        <end position="758"/>
    </location>
</feature>
<feature type="topological domain" description="Cytoplasmic" evidence="2">
    <location>
        <begin position="1"/>
        <end position="117"/>
    </location>
</feature>
<feature type="transmembrane region" description="Helical" evidence="2">
    <location>
        <begin position="118"/>
        <end position="138"/>
    </location>
</feature>
<feature type="topological domain" description="Extracellular" evidence="2">
    <location>
        <begin position="139"/>
        <end position="187"/>
    </location>
</feature>
<feature type="transmembrane region" description="Helical" evidence="2">
    <location>
        <begin position="188"/>
        <end position="208"/>
    </location>
</feature>
<feature type="topological domain" description="Cytoplasmic" evidence="2">
    <location>
        <begin position="209"/>
        <end position="263"/>
    </location>
</feature>
<feature type="transmembrane region" description="Helical" evidence="2">
    <location>
        <begin position="264"/>
        <end position="284"/>
    </location>
</feature>
<feature type="topological domain" description="Extracellular" evidence="2">
    <location>
        <begin position="285"/>
        <end position="292"/>
    </location>
</feature>
<feature type="transmembrane region" description="Helical" evidence="2">
    <location>
        <begin position="293"/>
        <end position="313"/>
    </location>
</feature>
<feature type="topological domain" description="Cytoplasmic" evidence="2">
    <location>
        <begin position="314"/>
        <end position="340"/>
    </location>
</feature>
<feature type="transmembrane region" description="Helical" evidence="2">
    <location>
        <begin position="341"/>
        <end position="361"/>
    </location>
</feature>
<feature type="topological domain" description="Extracellular" evidence="2">
    <location>
        <begin position="362"/>
        <end position="380"/>
    </location>
</feature>
<feature type="transmembrane region" description="Helical" evidence="2">
    <location>
        <begin position="381"/>
        <end position="401"/>
    </location>
</feature>
<feature type="topological domain" description="Cytoplasmic" evidence="2">
    <location>
        <begin position="402"/>
        <end position="417"/>
    </location>
</feature>
<feature type="transmembrane region" description="Helical" evidence="2">
    <location>
        <begin position="418"/>
        <end position="438"/>
    </location>
</feature>
<feature type="topological domain" description="Extracellular" evidence="2">
    <location>
        <begin position="439"/>
        <end position="485"/>
    </location>
</feature>
<feature type="transmembrane region" description="Helical" evidence="2">
    <location>
        <begin position="486"/>
        <end position="506"/>
    </location>
</feature>
<feature type="topological domain" description="Cytoplasmic" evidence="2">
    <location>
        <begin position="507"/>
        <end position="758"/>
    </location>
</feature>
<feature type="domain" description="STAS" evidence="3">
    <location>
        <begin position="531"/>
        <end position="741"/>
    </location>
</feature>
<feature type="region of interest" description="Disordered" evidence="4">
    <location>
        <begin position="585"/>
        <end position="608"/>
    </location>
</feature>
<feature type="modified residue" description="Phosphoserine" evidence="1">
    <location>
        <position position="751"/>
    </location>
</feature>
<feature type="glycosylation site" description="N-linked (GlcNAc) asparagine" evidence="1">
    <location>
        <position position="174"/>
    </location>
</feature>
<feature type="splice variant" id="VSP_047853" description="In isoform 2, isoform 3, isoform 4 and isoform 5." evidence="27 28 29 30 31 32">
    <location>
        <begin position="1"/>
        <end position="23"/>
    </location>
</feature>
<feature type="splice variant" id="VSP_061788" description="In isoform 4." evidence="32">
    <location>
        <begin position="444"/>
        <end position="475"/>
    </location>
</feature>
<feature type="splice variant" id="VSP_061789" description="In isoform 5." evidence="32">
    <original>CGVDVDRLITQKKKRIKKQEMKLKRMKKAKKSQKQDASSKISSVSVNVNTNLEDVKSNDVEGSEAKVHQGEELQDVVSSNQEDAKAPTMTSLKSLGLPQPGFHSLILDLSTLSFVDTVCIKSLKNIFRDFREIEVEVYIAACYSPVVAQLEAGHFFDESITKQHVFASVHDAVTFALSHRKSVPKSPVLATKL</original>
    <variation>VRPGSPGLERVREGLKLLICPEYQPASASDLCL</variation>
    <location>
        <begin position="566"/>
        <end position="758"/>
    </location>
</feature>
<feature type="splice variant" id="VSP_047854" description="In isoform 3." evidence="31">
    <original>IFRDFREIEVEVYIAACYSPVVAQLEAGHFFDESITKQHVFASVHDAVTFALSHRKSVPKSPVLATKL</original>
    <variation>VRDCRQARAPQAFMLILPLASHLLATPPPNKPSPLSSPTKPCPIAASLRPALFVAADFP</variation>
    <location>
        <begin position="691"/>
        <end position="758"/>
    </location>
</feature>
<feature type="sequence conflict" description="In Ref. 1; AAK51131 and 3; BAC55182." evidence="33" ref="1 3">
    <original>E</original>
    <variation>G</variation>
    <location>
        <position position="25"/>
    </location>
</feature>
<feature type="sequence conflict" description="In Ref. 2; AAL13129/AAN07089." evidence="33" ref="2">
    <original>R</original>
    <variation>P</variation>
    <location>
        <position position="572"/>
    </location>
</feature>
<feature type="mutagenesis site" description="Does not inhibit formate transport in PMA-induced cells." evidence="14">
    <original>T</original>
    <variation>A</variation>
    <location sequence="Q8CIW6-2">
        <position position="552"/>
    </location>
</feature>
<dbReference type="EMBL" id="AY032863">
    <property type="protein sequence ID" value="AAK51131.1"/>
    <property type="molecule type" value="mRNA"/>
</dbReference>
<dbReference type="EMBL" id="AF248494">
    <property type="protein sequence ID" value="AAN07089.1"/>
    <property type="molecule type" value="mRNA"/>
</dbReference>
<dbReference type="EMBL" id="AY049076">
    <property type="protein sequence ID" value="AAL13129.1"/>
    <property type="molecule type" value="mRNA"/>
</dbReference>
<dbReference type="EMBL" id="AB099881">
    <property type="protein sequence ID" value="BAC55182.1"/>
    <property type="molecule type" value="mRNA"/>
</dbReference>
<dbReference type="EMBL" id="AK163670">
    <property type="protein sequence ID" value="BAE37450.1"/>
    <property type="molecule type" value="mRNA"/>
</dbReference>
<dbReference type="EMBL" id="AK163671">
    <property type="protein sequence ID" value="BAE37451.1"/>
    <property type="molecule type" value="mRNA"/>
</dbReference>
<dbReference type="EMBL" id="AC168054">
    <property type="status" value="NOT_ANNOTATED_CDS"/>
    <property type="molecule type" value="Genomic_DNA"/>
</dbReference>
<dbReference type="EMBL" id="CAAA01111125">
    <property type="status" value="NOT_ANNOTATED_CDS"/>
    <property type="molecule type" value="Genomic_DNA"/>
</dbReference>
<dbReference type="EMBL" id="CAAA01200220">
    <property type="status" value="NOT_ANNOTATED_CDS"/>
    <property type="molecule type" value="Genomic_DNA"/>
</dbReference>
<dbReference type="EMBL" id="CH466560">
    <property type="protein sequence ID" value="EDL21319.1"/>
    <property type="molecule type" value="Genomic_DNA"/>
</dbReference>
<dbReference type="EMBL" id="BC028856">
    <property type="protein sequence ID" value="AAH28856.1"/>
    <property type="molecule type" value="mRNA"/>
</dbReference>
<dbReference type="RefSeq" id="NP_001395316.1">
    <molecule id="Q8CIW6-1"/>
    <property type="nucleotide sequence ID" value="NM_001408387.1"/>
</dbReference>
<dbReference type="RefSeq" id="NP_599252.2">
    <molecule id="Q8CIW6-2"/>
    <property type="nucleotide sequence ID" value="NM_134420.4"/>
</dbReference>
<dbReference type="RefSeq" id="XP_036010527.1">
    <molecule id="Q8CIW6-2"/>
    <property type="nucleotide sequence ID" value="XM_036154634.1"/>
</dbReference>
<dbReference type="SMR" id="Q8CIW6"/>
<dbReference type="FunCoup" id="Q8CIW6">
    <property type="interactions" value="179"/>
</dbReference>
<dbReference type="IntAct" id="Q8CIW6">
    <property type="interactions" value="3"/>
</dbReference>
<dbReference type="STRING" id="10090.ENSMUSP00000095979"/>
<dbReference type="ChEMBL" id="CHEMBL4523388"/>
<dbReference type="TCDB" id="2.A.53.2.8">
    <property type="family name" value="the sulfate permease (sulp) family"/>
</dbReference>
<dbReference type="GlyGen" id="Q8CIW6">
    <property type="glycosylation" value="2 sites, 2 N-linked glycans (2 sites)"/>
</dbReference>
<dbReference type="iPTMnet" id="Q8CIW6"/>
<dbReference type="PhosphoSitePlus" id="Q8CIW6"/>
<dbReference type="SwissPalm" id="Q8CIW6"/>
<dbReference type="jPOST" id="Q8CIW6"/>
<dbReference type="PaxDb" id="10090-ENSMUSP00000095979"/>
<dbReference type="PeptideAtlas" id="Q8CIW6"/>
<dbReference type="ProteomicsDB" id="260896">
    <molecule id="Q8CIW6-1"/>
</dbReference>
<dbReference type="ProteomicsDB" id="260897">
    <molecule id="Q8CIW6-2"/>
</dbReference>
<dbReference type="ProteomicsDB" id="260898">
    <molecule id="Q8CIW6-3"/>
</dbReference>
<dbReference type="Antibodypedia" id="30187">
    <property type="antibodies" value="201 antibodies from 26 providers"/>
</dbReference>
<dbReference type="DNASU" id="171429"/>
<dbReference type="Ensembl" id="ENSMUST00000188557.8">
    <molecule id="Q8CIW6-1"/>
    <property type="protein sequence ID" value="ENSMUSP00000140849.3"/>
    <property type="gene ID" value="ENSMUSG00000023259.18"/>
</dbReference>
<dbReference type="Ensembl" id="ENSMUST00000239562.1">
    <molecule id="Q8CIW6-2"/>
    <property type="protein sequence ID" value="ENSMUSP00000159445.2"/>
    <property type="gene ID" value="ENSMUSG00000023259.18"/>
</dbReference>
<dbReference type="GeneID" id="171429"/>
<dbReference type="KEGG" id="mmu:171429"/>
<dbReference type="UCSC" id="uc009rrd.1">
    <molecule id="Q8CIW6-1"/>
    <property type="organism name" value="mouse"/>
</dbReference>
<dbReference type="AGR" id="MGI:2159728"/>
<dbReference type="CTD" id="65010"/>
<dbReference type="MGI" id="MGI:2159728">
    <property type="gene designation" value="Slc26a6"/>
</dbReference>
<dbReference type="eggNOG" id="KOG0236">
    <property type="taxonomic scope" value="Eukaryota"/>
</dbReference>
<dbReference type="GeneTree" id="ENSGT01070000253775"/>
<dbReference type="InParanoid" id="Q8CIW6"/>
<dbReference type="OMA" id="KFMMALQ"/>
<dbReference type="OrthoDB" id="288203at2759"/>
<dbReference type="TreeFam" id="TF313784"/>
<dbReference type="Reactome" id="R-MMU-427601">
    <property type="pathway name" value="Multifunctional anion exchangers"/>
</dbReference>
<dbReference type="SABIO-RK" id="Q8CIW6"/>
<dbReference type="BioGRID-ORCS" id="171429">
    <property type="hits" value="1 hit in 25 CRISPR screens"/>
</dbReference>
<dbReference type="PRO" id="PR:Q8CIW6"/>
<dbReference type="Proteomes" id="UP000000589">
    <property type="component" value="Chromosome 9"/>
</dbReference>
<dbReference type="RNAct" id="Q8CIW6">
    <property type="molecule type" value="protein"/>
</dbReference>
<dbReference type="Bgee" id="ENSMUSG00000023259">
    <property type="expression patterns" value="Expressed in duodenum and 65 other cell types or tissues"/>
</dbReference>
<dbReference type="ExpressionAtlas" id="Q8CIW6">
    <property type="expression patterns" value="baseline and differential"/>
</dbReference>
<dbReference type="GO" id="GO:0016324">
    <property type="term" value="C:apical plasma membrane"/>
    <property type="evidence" value="ECO:0000314"/>
    <property type="project" value="UniProtKB"/>
</dbReference>
<dbReference type="GO" id="GO:0016323">
    <property type="term" value="C:basolateral plasma membrane"/>
    <property type="evidence" value="ECO:0007669"/>
    <property type="project" value="Ensembl"/>
</dbReference>
<dbReference type="GO" id="GO:0031526">
    <property type="term" value="C:brush border membrane"/>
    <property type="evidence" value="ECO:0000314"/>
    <property type="project" value="UniProtKB"/>
</dbReference>
<dbReference type="GO" id="GO:0034707">
    <property type="term" value="C:chloride channel complex"/>
    <property type="evidence" value="ECO:0007669"/>
    <property type="project" value="UniProtKB-KW"/>
</dbReference>
<dbReference type="GO" id="GO:0030659">
    <property type="term" value="C:cytoplasmic vesicle membrane"/>
    <property type="evidence" value="ECO:0007669"/>
    <property type="project" value="UniProtKB-SubCell"/>
</dbReference>
<dbReference type="GO" id="GO:0005829">
    <property type="term" value="C:cytosol"/>
    <property type="evidence" value="ECO:0007669"/>
    <property type="project" value="Ensembl"/>
</dbReference>
<dbReference type="GO" id="GO:0005783">
    <property type="term" value="C:endoplasmic reticulum"/>
    <property type="evidence" value="ECO:0007669"/>
    <property type="project" value="UniProtKB-KW"/>
</dbReference>
<dbReference type="GO" id="GO:0016020">
    <property type="term" value="C:membrane"/>
    <property type="evidence" value="ECO:0000314"/>
    <property type="project" value="UniProtKB"/>
</dbReference>
<dbReference type="GO" id="GO:0005886">
    <property type="term" value="C:plasma membrane"/>
    <property type="evidence" value="ECO:0000314"/>
    <property type="project" value="UniProtKB"/>
</dbReference>
<dbReference type="GO" id="GO:0097225">
    <property type="term" value="C:sperm midpiece"/>
    <property type="evidence" value="ECO:0000314"/>
    <property type="project" value="UniProtKB"/>
</dbReference>
<dbReference type="GO" id="GO:0031982">
    <property type="term" value="C:vesicle"/>
    <property type="evidence" value="ECO:0000314"/>
    <property type="project" value="UniProtKB"/>
</dbReference>
<dbReference type="GO" id="GO:0012506">
    <property type="term" value="C:vesicle membrane"/>
    <property type="evidence" value="ECO:0000314"/>
    <property type="project" value="UniProtKB"/>
</dbReference>
<dbReference type="GO" id="GO:0015106">
    <property type="term" value="F:bicarbonate transmembrane transporter activity"/>
    <property type="evidence" value="ECO:0000314"/>
    <property type="project" value="UniProtKB"/>
</dbReference>
<dbReference type="GO" id="GO:0005254">
    <property type="term" value="F:chloride channel activity"/>
    <property type="evidence" value="ECO:0007669"/>
    <property type="project" value="UniProtKB-KW"/>
</dbReference>
<dbReference type="GO" id="GO:0015108">
    <property type="term" value="F:chloride transmembrane transporter activity"/>
    <property type="evidence" value="ECO:0000314"/>
    <property type="project" value="UniProtKB"/>
</dbReference>
<dbReference type="GO" id="GO:0140900">
    <property type="term" value="F:chloride:bicarbonate antiporter activity"/>
    <property type="evidence" value="ECO:0000314"/>
    <property type="project" value="UniProtKB"/>
</dbReference>
<dbReference type="GO" id="GO:0015562">
    <property type="term" value="F:efflux transmembrane transporter activity"/>
    <property type="evidence" value="ECO:0000314"/>
    <property type="project" value="UniProtKB"/>
</dbReference>
<dbReference type="GO" id="GO:0015499">
    <property type="term" value="F:formate transmembrane transporter activity"/>
    <property type="evidence" value="ECO:0000314"/>
    <property type="project" value="UniProtKB"/>
</dbReference>
<dbReference type="GO" id="GO:0019531">
    <property type="term" value="F:oxalate transmembrane transporter activity"/>
    <property type="evidence" value="ECO:0000314"/>
    <property type="project" value="UniProtKB"/>
</dbReference>
<dbReference type="GO" id="GO:0030165">
    <property type="term" value="F:PDZ domain binding"/>
    <property type="evidence" value="ECO:0000314"/>
    <property type="project" value="UniProtKB"/>
</dbReference>
<dbReference type="GO" id="GO:0008271">
    <property type="term" value="F:secondary active sulfate transmembrane transporter activity"/>
    <property type="evidence" value="ECO:0007669"/>
    <property type="project" value="InterPro"/>
</dbReference>
<dbReference type="GO" id="GO:0005452">
    <property type="term" value="F:solute:inorganic anion antiporter activity"/>
    <property type="evidence" value="ECO:0000314"/>
    <property type="project" value="UniProtKB"/>
</dbReference>
<dbReference type="GO" id="GO:0015116">
    <property type="term" value="F:sulfate transmembrane transporter activity"/>
    <property type="evidence" value="ECO:0000314"/>
    <property type="project" value="UniProtKB"/>
</dbReference>
<dbReference type="GO" id="GO:0038166">
    <property type="term" value="P:angiotensin-activated signaling pathway"/>
    <property type="evidence" value="ECO:0000250"/>
    <property type="project" value="UniProtKB"/>
</dbReference>
<dbReference type="GO" id="GO:0015701">
    <property type="term" value="P:bicarbonate transport"/>
    <property type="evidence" value="ECO:0000314"/>
    <property type="project" value="UniProtKB"/>
</dbReference>
<dbReference type="GO" id="GO:0071320">
    <property type="term" value="P:cellular response to cAMP"/>
    <property type="evidence" value="ECO:0000314"/>
    <property type="project" value="UniProtKB"/>
</dbReference>
<dbReference type="GO" id="GO:0071332">
    <property type="term" value="P:cellular response to fructose stimulus"/>
    <property type="evidence" value="ECO:0000314"/>
    <property type="project" value="UniProtKB"/>
</dbReference>
<dbReference type="GO" id="GO:0071346">
    <property type="term" value="P:cellular response to type II interferon"/>
    <property type="evidence" value="ECO:0007669"/>
    <property type="project" value="Ensembl"/>
</dbReference>
<dbReference type="GO" id="GO:0006821">
    <property type="term" value="P:chloride transport"/>
    <property type="evidence" value="ECO:0000314"/>
    <property type="project" value="UniProtKB"/>
</dbReference>
<dbReference type="GO" id="GO:0042045">
    <property type="term" value="P:epithelial fluid transport"/>
    <property type="evidence" value="ECO:0000315"/>
    <property type="project" value="UniProtKB"/>
</dbReference>
<dbReference type="GO" id="GO:0051649">
    <property type="term" value="P:establishment of localization in cell"/>
    <property type="evidence" value="ECO:0000315"/>
    <property type="project" value="MGI"/>
</dbReference>
<dbReference type="GO" id="GO:0044849">
    <property type="term" value="P:estrous cycle"/>
    <property type="evidence" value="ECO:0007669"/>
    <property type="project" value="Ensembl"/>
</dbReference>
<dbReference type="GO" id="GO:0015724">
    <property type="term" value="P:formate transport"/>
    <property type="evidence" value="ECO:0000314"/>
    <property type="project" value="UniProtKB"/>
</dbReference>
<dbReference type="GO" id="GO:0050892">
    <property type="term" value="P:intestinal absorption"/>
    <property type="evidence" value="ECO:0000315"/>
    <property type="project" value="UniProtKB"/>
</dbReference>
<dbReference type="GO" id="GO:0051454">
    <property type="term" value="P:intracellular pH elevation"/>
    <property type="evidence" value="ECO:0000315"/>
    <property type="project" value="UniProtKB"/>
</dbReference>
<dbReference type="GO" id="GO:0015797">
    <property type="term" value="P:mannitol transmembrane transport"/>
    <property type="evidence" value="ECO:0000315"/>
    <property type="project" value="UniProtKB"/>
</dbReference>
<dbReference type="GO" id="GO:0019532">
    <property type="term" value="P:oxalate transport"/>
    <property type="evidence" value="ECO:0000314"/>
    <property type="project" value="UniProtKB"/>
</dbReference>
<dbReference type="GO" id="GO:0046724">
    <property type="term" value="P:oxalic acid secretion"/>
    <property type="evidence" value="ECO:0000315"/>
    <property type="project" value="UniProtKB"/>
</dbReference>
<dbReference type="GO" id="GO:2001150">
    <property type="term" value="P:positive regulation of dipeptide transmembrane transport"/>
    <property type="evidence" value="ECO:0000315"/>
    <property type="project" value="UniProtKB"/>
</dbReference>
<dbReference type="GO" id="GO:0070528">
    <property type="term" value="P:protein kinase C signaling"/>
    <property type="evidence" value="ECO:0000250"/>
    <property type="project" value="UniProtKB"/>
</dbReference>
<dbReference type="GO" id="GO:0051453">
    <property type="term" value="P:regulation of intracellular pH"/>
    <property type="evidence" value="ECO:0000315"/>
    <property type="project" value="UniProtKB"/>
</dbReference>
<dbReference type="GO" id="GO:0048240">
    <property type="term" value="P:sperm capacitation"/>
    <property type="evidence" value="ECO:0000315"/>
    <property type="project" value="UniProtKB"/>
</dbReference>
<dbReference type="GO" id="GO:1902358">
    <property type="term" value="P:sulfate transmembrane transport"/>
    <property type="evidence" value="ECO:0000314"/>
    <property type="project" value="UniProtKB"/>
</dbReference>
<dbReference type="GO" id="GO:0030321">
    <property type="term" value="P:transepithelial chloride transport"/>
    <property type="evidence" value="ECO:0000314"/>
    <property type="project" value="UniProtKB"/>
</dbReference>
<dbReference type="GO" id="GO:0070633">
    <property type="term" value="P:transepithelial transport"/>
    <property type="evidence" value="ECO:0000315"/>
    <property type="project" value="UniProtKB"/>
</dbReference>
<dbReference type="CDD" id="cd07042">
    <property type="entry name" value="STAS_SulP_like_sulfate_transporter"/>
    <property type="match status" value="1"/>
</dbReference>
<dbReference type="Gene3D" id="3.30.750.24">
    <property type="entry name" value="STAS domain"/>
    <property type="match status" value="1"/>
</dbReference>
<dbReference type="InterPro" id="IPR018045">
    <property type="entry name" value="S04_transporter_CS"/>
</dbReference>
<dbReference type="InterPro" id="IPR011547">
    <property type="entry name" value="SLC26A/SulP_dom"/>
</dbReference>
<dbReference type="InterPro" id="IPR001902">
    <property type="entry name" value="SLC26A/SulP_fam"/>
</dbReference>
<dbReference type="InterPro" id="IPR002645">
    <property type="entry name" value="STAS_dom"/>
</dbReference>
<dbReference type="InterPro" id="IPR036513">
    <property type="entry name" value="STAS_dom_sf"/>
</dbReference>
<dbReference type="NCBIfam" id="TIGR00815">
    <property type="entry name" value="sulP"/>
    <property type="match status" value="1"/>
</dbReference>
<dbReference type="PANTHER" id="PTHR11814">
    <property type="entry name" value="SULFATE TRANSPORTER"/>
    <property type="match status" value="1"/>
</dbReference>
<dbReference type="Pfam" id="PF01740">
    <property type="entry name" value="STAS"/>
    <property type="match status" value="1"/>
</dbReference>
<dbReference type="Pfam" id="PF00916">
    <property type="entry name" value="Sulfate_transp"/>
    <property type="match status" value="1"/>
</dbReference>
<dbReference type="SUPFAM" id="SSF52091">
    <property type="entry name" value="SpoIIaa-like"/>
    <property type="match status" value="1"/>
</dbReference>
<dbReference type="PROSITE" id="PS01130">
    <property type="entry name" value="SLC26A"/>
    <property type="match status" value="1"/>
</dbReference>
<dbReference type="PROSITE" id="PS50801">
    <property type="entry name" value="STAS"/>
    <property type="match status" value="1"/>
</dbReference>
<sequence>MGLPDGSDQGTHQTQALLSAAQEMELQRRDYHVERPLLNQEQLEDLGHWGPAAKTHQWRTWFRCSRARAHSLLLQHVPVLGWLPRYPVREWLLGDLLSGLSVAIMQLPQGLAYALLAGLPPMFGLYSSFYPVFIYFLFGTSRHISVGTFAVMSVMVGSVTESLTADKAFVQGLNATADDARVQVAYTLSFLVGLFQVGLGLVHFGFVVTYLSEPLVRSYTTAASVQVLVSQLKYVFGIKLSSHSGPLSVIYTVLEVCAQLPETVPGTVVTAIVAGVALVLVKLLNEKLHRRLPLPIPGELLTLIGATGISYGVKLNDRFKVDVVGNITTGLIPPVAPKTELFATLVGNAFAIAVVGFAIAISLGKIFALRHGYRVDSNQELVALGLSNLIGGFFQCFPVSCSMSRSLVQESTGGNTQVAGAVSSLFILLIIVKLGELFRDLPKAVLAAVIIVNLKGMMKQFSDICSLWKANRVDLLIWLVTFVATILLNLDIGLAVSIVFSLLLVVVRMQLPHYSVLGQVPDTDIYRDVAEYSGAKEVPGVKVFRSSATLYFANAELYSDSLKEKCGVDVDRLITQKKKRIKKQEMKLKRMKKAKKSQKQDASSKISSVSVNVNTNLEDVKSNDVEGSEAKVHQGEELQDVVSSNQEDAKAPTMTSLKSLGLPQPGFHSLILDLSTLSFVDTVCIKSLKNIFRDFREIEVEVYIAACYSPVVAQLEAGHFFDESITKQHVFASVHDAVTFALSHRKSVPKSPVLATKL</sequence>
<reference key="1">
    <citation type="journal article" date="2001" name="Proc. Natl. Acad. Sci. U.S.A.">
        <title>Identification of a chloride-formate exchanger expressed on the brush border membrane of renal proximal tubule cells.</title>
        <authorList>
            <person name="Knauf F."/>
            <person name="Yang C.L."/>
            <person name="Thomson R.B."/>
            <person name="Mentone S.A."/>
            <person name="Giebisch G."/>
            <person name="Aronson P.S."/>
        </authorList>
    </citation>
    <scope>NUCLEOTIDE SEQUENCE [MRNA] (ISOFORM 2)</scope>
    <scope>FUNCTION</scope>
    <scope>ACTIVITY REGULATION</scope>
    <scope>SUBCELLULAR LOCATION</scope>
    <scope>TISSUE SPECIFICITY</scope>
    <scope>TRANSPORTER ACTIVITY</scope>
    <source>
        <strain>BALB/cJ</strain>
    </source>
</reference>
<reference key="2">
    <citation type="journal article" date="2002" name="Am. J. Physiol.">
        <title>Molecular characterization of the murine Slc26a6 anion exchanger: functional comparison with Slc26a1.</title>
        <authorList>
            <person name="Xie Q."/>
            <person name="Welch R."/>
            <person name="Mercado A."/>
            <person name="Romero M.F."/>
            <person name="Mount D.B."/>
        </authorList>
    </citation>
    <scope>NUCLEOTIDE SEQUENCE [MRNA] (ISOFORMS 1 AND 2)</scope>
    <scope>FUNCTION</scope>
    <scope>ACTIVITY REGULATION</scope>
    <scope>TISSUE SPECIFICITY</scope>
    <scope>TRANSPORTER ACTIVITY</scope>
    <source>
        <strain>C57BL/6J</strain>
    </source>
</reference>
<reference key="3">
    <citation type="journal article" date="2004" name="J. Drug. Target.">
        <title>Role of anion exchange transporter PAT1 (SLC26A6) in intestinal absorption of organic anions.</title>
        <authorList>
            <person name="Nozawa T."/>
            <person name="Sugiura S."/>
            <person name="Hashino Y."/>
            <person name="Tsuji A."/>
            <person name="Tamai I."/>
        </authorList>
    </citation>
    <scope>NUCLEOTIDE SEQUENCE [MRNA] (ISOFORM 2)</scope>
    <scope>FUNCTION</scope>
    <scope>ACTIVITY REGULATION</scope>
    <scope>BIOPHYSICOCHEMICAL PROPERTIES</scope>
    <scope>TRANSPORTER ACTIVITY</scope>
    <source>
        <strain>BALB/cJ</strain>
        <tissue>Kidney</tissue>
    </source>
</reference>
<reference key="4">
    <citation type="journal article" date="2005" name="Science">
        <title>The transcriptional landscape of the mammalian genome.</title>
        <authorList>
            <person name="Carninci P."/>
            <person name="Kasukawa T."/>
            <person name="Katayama S."/>
            <person name="Gough J."/>
            <person name="Frith M.C."/>
            <person name="Maeda N."/>
            <person name="Oyama R."/>
            <person name="Ravasi T."/>
            <person name="Lenhard B."/>
            <person name="Wells C."/>
            <person name="Kodzius R."/>
            <person name="Shimokawa K."/>
            <person name="Bajic V.B."/>
            <person name="Brenner S.E."/>
            <person name="Batalov S."/>
            <person name="Forrest A.R."/>
            <person name="Zavolan M."/>
            <person name="Davis M.J."/>
            <person name="Wilming L.G."/>
            <person name="Aidinis V."/>
            <person name="Allen J.E."/>
            <person name="Ambesi-Impiombato A."/>
            <person name="Apweiler R."/>
            <person name="Aturaliya R.N."/>
            <person name="Bailey T.L."/>
            <person name="Bansal M."/>
            <person name="Baxter L."/>
            <person name="Beisel K.W."/>
            <person name="Bersano T."/>
            <person name="Bono H."/>
            <person name="Chalk A.M."/>
            <person name="Chiu K.P."/>
            <person name="Choudhary V."/>
            <person name="Christoffels A."/>
            <person name="Clutterbuck D.R."/>
            <person name="Crowe M.L."/>
            <person name="Dalla E."/>
            <person name="Dalrymple B.P."/>
            <person name="de Bono B."/>
            <person name="Della Gatta G."/>
            <person name="di Bernardo D."/>
            <person name="Down T."/>
            <person name="Engstrom P."/>
            <person name="Fagiolini M."/>
            <person name="Faulkner G."/>
            <person name="Fletcher C.F."/>
            <person name="Fukushima T."/>
            <person name="Furuno M."/>
            <person name="Futaki S."/>
            <person name="Gariboldi M."/>
            <person name="Georgii-Hemming P."/>
            <person name="Gingeras T.R."/>
            <person name="Gojobori T."/>
            <person name="Green R.E."/>
            <person name="Gustincich S."/>
            <person name="Harbers M."/>
            <person name="Hayashi Y."/>
            <person name="Hensch T.K."/>
            <person name="Hirokawa N."/>
            <person name="Hill D."/>
            <person name="Huminiecki L."/>
            <person name="Iacono M."/>
            <person name="Ikeo K."/>
            <person name="Iwama A."/>
            <person name="Ishikawa T."/>
            <person name="Jakt M."/>
            <person name="Kanapin A."/>
            <person name="Katoh M."/>
            <person name="Kawasawa Y."/>
            <person name="Kelso J."/>
            <person name="Kitamura H."/>
            <person name="Kitano H."/>
            <person name="Kollias G."/>
            <person name="Krishnan S.P."/>
            <person name="Kruger A."/>
            <person name="Kummerfeld S.K."/>
            <person name="Kurochkin I.V."/>
            <person name="Lareau L.F."/>
            <person name="Lazarevic D."/>
            <person name="Lipovich L."/>
            <person name="Liu J."/>
            <person name="Liuni S."/>
            <person name="McWilliam S."/>
            <person name="Madan Babu M."/>
            <person name="Madera M."/>
            <person name="Marchionni L."/>
            <person name="Matsuda H."/>
            <person name="Matsuzawa S."/>
            <person name="Miki H."/>
            <person name="Mignone F."/>
            <person name="Miyake S."/>
            <person name="Morris K."/>
            <person name="Mottagui-Tabar S."/>
            <person name="Mulder N."/>
            <person name="Nakano N."/>
            <person name="Nakauchi H."/>
            <person name="Ng P."/>
            <person name="Nilsson R."/>
            <person name="Nishiguchi S."/>
            <person name="Nishikawa S."/>
            <person name="Nori F."/>
            <person name="Ohara O."/>
            <person name="Okazaki Y."/>
            <person name="Orlando V."/>
            <person name="Pang K.C."/>
            <person name="Pavan W.J."/>
            <person name="Pavesi G."/>
            <person name="Pesole G."/>
            <person name="Petrovsky N."/>
            <person name="Piazza S."/>
            <person name="Reed J."/>
            <person name="Reid J.F."/>
            <person name="Ring B.Z."/>
            <person name="Ringwald M."/>
            <person name="Rost B."/>
            <person name="Ruan Y."/>
            <person name="Salzberg S.L."/>
            <person name="Sandelin A."/>
            <person name="Schneider C."/>
            <person name="Schoenbach C."/>
            <person name="Sekiguchi K."/>
            <person name="Semple C.A."/>
            <person name="Seno S."/>
            <person name="Sessa L."/>
            <person name="Sheng Y."/>
            <person name="Shibata Y."/>
            <person name="Shimada H."/>
            <person name="Shimada K."/>
            <person name="Silva D."/>
            <person name="Sinclair B."/>
            <person name="Sperling S."/>
            <person name="Stupka E."/>
            <person name="Sugiura K."/>
            <person name="Sultana R."/>
            <person name="Takenaka Y."/>
            <person name="Taki K."/>
            <person name="Tammoja K."/>
            <person name="Tan S.L."/>
            <person name="Tang S."/>
            <person name="Taylor M.S."/>
            <person name="Tegner J."/>
            <person name="Teichmann S.A."/>
            <person name="Ueda H.R."/>
            <person name="van Nimwegen E."/>
            <person name="Verardo R."/>
            <person name="Wei C.L."/>
            <person name="Yagi K."/>
            <person name="Yamanishi H."/>
            <person name="Zabarovsky E."/>
            <person name="Zhu S."/>
            <person name="Zimmer A."/>
            <person name="Hide W."/>
            <person name="Bult C."/>
            <person name="Grimmond S.M."/>
            <person name="Teasdale R.D."/>
            <person name="Liu E.T."/>
            <person name="Brusic V."/>
            <person name="Quackenbush J."/>
            <person name="Wahlestedt C."/>
            <person name="Mattick J.S."/>
            <person name="Hume D.A."/>
            <person name="Kai C."/>
            <person name="Sasaki D."/>
            <person name="Tomaru Y."/>
            <person name="Fukuda S."/>
            <person name="Kanamori-Katayama M."/>
            <person name="Suzuki M."/>
            <person name="Aoki J."/>
            <person name="Arakawa T."/>
            <person name="Iida J."/>
            <person name="Imamura K."/>
            <person name="Itoh M."/>
            <person name="Kato T."/>
            <person name="Kawaji H."/>
            <person name="Kawagashira N."/>
            <person name="Kawashima T."/>
            <person name="Kojima M."/>
            <person name="Kondo S."/>
            <person name="Konno H."/>
            <person name="Nakano K."/>
            <person name="Ninomiya N."/>
            <person name="Nishio T."/>
            <person name="Okada M."/>
            <person name="Plessy C."/>
            <person name="Shibata K."/>
            <person name="Shiraki T."/>
            <person name="Suzuki S."/>
            <person name="Tagami M."/>
            <person name="Waki K."/>
            <person name="Watahiki A."/>
            <person name="Okamura-Oho Y."/>
            <person name="Suzuki H."/>
            <person name="Kawai J."/>
            <person name="Hayashizaki Y."/>
        </authorList>
    </citation>
    <scope>NUCLEOTIDE SEQUENCE [LARGE SCALE MRNA] (ISOFORM 3)</scope>
    <source>
        <strain>C57BL/6J</strain>
        <tissue>Medulla oblongata</tissue>
    </source>
</reference>
<reference key="5">
    <citation type="journal article" date="2009" name="PLoS Biol.">
        <title>Lineage-specific biology revealed by a finished genome assembly of the mouse.</title>
        <authorList>
            <person name="Church D.M."/>
            <person name="Goodstadt L."/>
            <person name="Hillier L.W."/>
            <person name="Zody M.C."/>
            <person name="Goldstein S."/>
            <person name="She X."/>
            <person name="Bult C.J."/>
            <person name="Agarwala R."/>
            <person name="Cherry J.L."/>
            <person name="DiCuccio M."/>
            <person name="Hlavina W."/>
            <person name="Kapustin Y."/>
            <person name="Meric P."/>
            <person name="Maglott D."/>
            <person name="Birtle Z."/>
            <person name="Marques A.C."/>
            <person name="Graves T."/>
            <person name="Zhou S."/>
            <person name="Teague B."/>
            <person name="Potamousis K."/>
            <person name="Churas C."/>
            <person name="Place M."/>
            <person name="Herschleb J."/>
            <person name="Runnheim R."/>
            <person name="Forrest D."/>
            <person name="Amos-Landgraf J."/>
            <person name="Schwartz D.C."/>
            <person name="Cheng Z."/>
            <person name="Lindblad-Toh K."/>
            <person name="Eichler E.E."/>
            <person name="Ponting C.P."/>
        </authorList>
    </citation>
    <scope>NUCLEOTIDE SEQUENCE [LARGE SCALE GENOMIC DNA]</scope>
    <source>
        <strain>C57BL/6J</strain>
    </source>
</reference>
<reference key="6">
    <citation type="submission" date="2005-07" db="EMBL/GenBank/DDBJ databases">
        <authorList>
            <person name="Mural R.J."/>
            <person name="Adams M.D."/>
            <person name="Myers E.W."/>
            <person name="Smith H.O."/>
            <person name="Venter J.C."/>
        </authorList>
    </citation>
    <scope>NUCLEOTIDE SEQUENCE [LARGE SCALE GENOMIC DNA]</scope>
</reference>
<reference key="7">
    <citation type="journal article" date="2004" name="Genome Res.">
        <title>The status, quality, and expansion of the NIH full-length cDNA project: the Mammalian Gene Collection (MGC).</title>
        <authorList>
            <consortium name="The MGC Project Team"/>
        </authorList>
    </citation>
    <scope>NUCLEOTIDE SEQUENCE [LARGE SCALE MRNA] (ISOFORM 2)</scope>
    <source>
        <strain>FVB/N</strain>
        <tissue>Salivary gland</tissue>
    </source>
</reference>
<reference key="8">
    <citation type="journal article" date="2002" name="Am. J. Physiol.">
        <title>Identification of an apical Cl(-)/HCO3(-) exchanger in the small intestine.</title>
        <authorList>
            <person name="Wang Z."/>
            <person name="Petrovic S."/>
            <person name="Mann E."/>
            <person name="Soleimani M."/>
        </authorList>
    </citation>
    <scope>FUNCTION</scope>
    <scope>SUBCELLULAR LOCATION</scope>
    <scope>TISSUE SPECIFICITY</scope>
    <scope>TRANSPORTER ACTIVITY</scope>
</reference>
<reference key="9">
    <citation type="journal article" date="2002" name="J. Biol. Chem.">
        <title>Specificity of anion exchange mediated by mouse Slc26a6.</title>
        <authorList>
            <person name="Jiang Z."/>
            <person name="Grichtchenko I.I."/>
            <person name="Boron W.F."/>
            <person name="Aronson P.S."/>
        </authorList>
    </citation>
    <scope>FUNCTION</scope>
    <scope>ACTIVITY REGULATION</scope>
    <scope>BIOPHYSICOCHEMICAL PROPERTIES</scope>
    <scope>TRANSPORTER ACTIVITY</scope>
</reference>
<reference key="10">
    <citation type="journal article" date="2005" name="Proc. Natl. Acad. Sci. U.S.A.">
        <title>Role of PDZK1 in membrane expression of renal brush border ion exchangers.</title>
        <authorList>
            <person name="Thomson R.B."/>
            <person name="Wang T."/>
            <person name="Thomson B.R."/>
            <person name="Tarrats L."/>
            <person name="Girardi A."/>
            <person name="Mentone S."/>
            <person name="Soleimani M."/>
            <person name="Kocher O."/>
            <person name="Aronson P.S."/>
        </authorList>
    </citation>
    <scope>FUNCTION</scope>
    <scope>INTERACTION WITH PDZK1</scope>
    <scope>SUBCELLULAR LOCATION</scope>
    <scope>TRANSPORTER ACTIVITY</scope>
</reference>
<reference key="11">
    <citation type="journal article" date="2006" name="EMBO J.">
        <title>Slc26a6 regulates CFTR activity in vivo to determine pancreatic duct HCO3-secretion: relevance to cystic fibrosis.</title>
        <authorList>
            <person name="Wang Y."/>
            <person name="Soyombo A.A."/>
            <person name="Shcheynikov N."/>
            <person name="Zeng W."/>
            <person name="Dorwart M."/>
            <person name="Marino C.R."/>
            <person name="Thomas P.J."/>
            <person name="Muallem S."/>
        </authorList>
    </citation>
    <scope>FUNCTION</scope>
    <scope>DISRUPTION PHENOTYPE</scope>
</reference>
<reference key="12">
    <citation type="journal article" date="2006" name="J. Gen. Physiol.">
        <title>Coupling modes and stoichiometry of Cl-/HCO3- exchange by slc26a3 and slc26a6.</title>
        <authorList>
            <person name="Shcheynikov N."/>
            <person name="Wang Y."/>
            <person name="Park M."/>
            <person name="Ko S.B."/>
            <person name="Dorwart M."/>
            <person name="Naruse S."/>
            <person name="Thomas P.J."/>
            <person name="Muallem S."/>
        </authorList>
    </citation>
    <scope>FUNCTION</scope>
    <scope>TRANSPORTER ACTIVITY</scope>
</reference>
<reference key="13">
    <citation type="journal article" date="2006" name="Nat. Genet.">
        <title>Calcium oxalate urolithiasis in mice lacking anion transporter Slc26a6.</title>
        <authorList>
            <person name="Jiang Z."/>
            <person name="Asplin J.R."/>
            <person name="Evan A.P."/>
            <person name="Rajendran V.M."/>
            <person name="Velazquez H."/>
            <person name="Nottoli T.P."/>
            <person name="Binder H.J."/>
            <person name="Aronson P.S."/>
        </authorList>
    </citation>
    <scope>FUNCTION</scope>
    <scope>SUBCELLULAR LOCATION</scope>
    <scope>DISRUPTION PHENOTYPE</scope>
    <scope>TRANSPORTER ACTIVITY</scope>
</reference>
<reference key="14">
    <citation type="journal article" date="2007" name="Am. J. Physiol.">
        <title>PAT-1 (Slc26a6) is the predominant apical membrane Cl-/HCO3-exchanger in the upper villous epithelium of the murine duodenum.</title>
        <authorList>
            <person name="Simpson J.E."/>
            <person name="Schweinfest C.W."/>
            <person name="Shull G.E."/>
            <person name="Gawenis L.R."/>
            <person name="Walker N.M."/>
            <person name="Boyle K.T."/>
            <person name="Soleimani M."/>
            <person name="Clarke L.L."/>
        </authorList>
    </citation>
    <scope>FUNCTION</scope>
    <scope>TISSUE SPECIFICITY</scope>
    <scope>SUBCELLULAR LOCATION</scope>
    <scope>TRANSPORTER ACTIVITY</scope>
</reference>
<reference key="15">
    <citation type="journal article" date="2007" name="Am. J. Physiol.">
        <title>Regulation of anion exchanger Slc26a6 by protein kinase C.</title>
        <authorList>
            <person name="Hassan H.A."/>
            <person name="Mentone S."/>
            <person name="Karniski L.P."/>
            <person name="Rajendran V.M."/>
            <person name="Aronson P.S."/>
        </authorList>
    </citation>
    <scope>FUNCTION (ISOFORM 2)</scope>
    <scope>SUBCELLULAR LOCATION</scope>
    <scope>MUTAGENESIS OF THR-552 (ISOFORM 2)</scope>
    <scope>TRANSPORTER ACTIVITY</scope>
</reference>
<reference key="16">
    <citation type="journal article" date="2008" name="Am. J. Nephrol.">
        <title>Slc26a6 (PAT1) deletion downregulates the apical Na+/H+ exchanger in the straight segment of the proximal tubule.</title>
        <authorList>
            <person name="Petrovic S."/>
            <person name="Barone S."/>
            <person name="Wang Z."/>
            <person name="McDonough A.A."/>
            <person name="Amlal H."/>
            <person name="Soleimani M."/>
        </authorList>
    </citation>
    <scope>FUNCTION</scope>
</reference>
<reference key="17">
    <citation type="journal article" date="2008" name="Kidney Int.">
        <title>Fructose-induced hypertension: essential role of chloride and fructose absorbing transporters PAT1 and Glut5.</title>
        <authorList>
            <person name="Singh A.K."/>
            <person name="Amlal H."/>
            <person name="Haas P.J."/>
            <person name="Dringenberg U."/>
            <person name="Fussell S."/>
            <person name="Barone S.L."/>
            <person name="Engelhardt R."/>
            <person name="Zuo J."/>
            <person name="Seidler U."/>
            <person name="Soleimani M."/>
        </authorList>
    </citation>
    <scope>FUNCTION</scope>
    <scope>SUBCELLULAR LOCATION</scope>
    <scope>INDUCTION</scope>
    <scope>DISRUPTION PHENOTYPE</scope>
</reference>
<reference key="18">
    <citation type="journal article" date="2010" name="Am. J. Physiol.">
        <title>Putative anion transporter-1 (Pat-1, Slc26a6) contributes to intracellular pH regulation during H+-dipeptide transport in duodenal villous epithelium.</title>
        <authorList>
            <person name="Simpson J.E."/>
            <person name="Walker N.M."/>
            <person name="Supuran C.T."/>
            <person name="Soleimani M."/>
            <person name="Clarke L.L."/>
        </authorList>
    </citation>
    <scope>FUNCTION</scope>
    <scope>TRANSPORTER ACTIVITY</scope>
</reference>
<reference key="19">
    <citation type="journal article" date="2010" name="Cell">
        <title>A tissue-specific atlas of mouse protein phosphorylation and expression.</title>
        <authorList>
            <person name="Huttlin E.L."/>
            <person name="Jedrychowski M.P."/>
            <person name="Elias J.E."/>
            <person name="Goswami T."/>
            <person name="Rad R."/>
            <person name="Beausoleil S.A."/>
            <person name="Villen J."/>
            <person name="Haas W."/>
            <person name="Sowa M.E."/>
            <person name="Gygi S.P."/>
        </authorList>
    </citation>
    <scope>IDENTIFICATION BY MASS SPECTROMETRY [LARGE SCALE ANALYSIS]</scope>
    <source>
        <tissue>Kidney</tissue>
    </source>
</reference>
<reference key="20">
    <citation type="journal article" date="2011" name="Acta Physiol.">
        <title>Functional activity of Pat-1 (Slc26a6) Cl(-)/HCO(3)(-) exchange in the lower villus epithelium of murine duodenum.</title>
        <authorList>
            <person name="Walker N.M."/>
            <person name="Simpson J.E."/>
            <person name="Hoover E.E."/>
            <person name="Brazill J.M."/>
            <person name="Schweinfest C.W."/>
            <person name="Soleimani M."/>
            <person name="Clarke L.L."/>
        </authorList>
    </citation>
    <scope>FUNCTION</scope>
    <scope>TRANSPORTER ACTIVITY</scope>
</reference>
<reference key="21">
    <citation type="journal article" date="2011" name="J. Am. Soc. Nephrol.">
        <title>Net intestinal transport of oxalate reflects passive absorption and SLC26A6-mediated secretion.</title>
        <authorList>
            <person name="Knauf F."/>
            <person name="Ko N."/>
            <person name="Jiang Z."/>
            <person name="Robertson W.G."/>
            <person name="Van Itallie C.M."/>
            <person name="Anderson J.M."/>
            <person name="Aronson P.S."/>
        </authorList>
    </citation>
    <scope>FUNCTION</scope>
    <scope>ACTIVITY REGULATION</scope>
    <scope>TRANSPORTER ACTIVITY</scope>
</reference>
<reference key="22">
    <citation type="journal article" date="2012" name="Am. J. Physiol.">
        <title>Deletion of Slc26a6 alters the stoichiometry of apical Cl-/HCO-3 exchange in mouse pancreatic duct.</title>
        <authorList>
            <person name="Song Y."/>
            <person name="Yamamoto A."/>
            <person name="Steward M.C."/>
            <person name="Ko S.B."/>
            <person name="Stewart A.K."/>
            <person name="Soleimani M."/>
            <person name="Liu B.C."/>
            <person name="Kondo T."/>
            <person name="Jin C.X."/>
            <person name="Ishiguro H."/>
        </authorList>
    </citation>
    <scope>FUNCTION</scope>
    <scope>ACTIVITY REGULATION</scope>
    <scope>TRANSPORTER ACTIVITY</scope>
</reference>
<reference key="23">
    <citation type="journal article" date="2012" name="Biol. Reprod.">
        <title>Participation of the Cl-/HCO(3)- exchangers SLC26A3 and SLC26A6, the Cl- channel CFTR, and the regulatory factor SLC9A3R1 in mouse sperm capacitation.</title>
        <authorList>
            <person name="Chavez J.C."/>
            <person name="Hernandez-Gonzalez E.O."/>
            <person name="Wertheimer E."/>
            <person name="Visconti P.E."/>
            <person name="Darszon A."/>
            <person name="Trevino C.L."/>
        </authorList>
    </citation>
    <scope>FUNCTION</scope>
    <scope>INTERACTION WITH CFTR; SLC26A3 AND SLC9A3R1</scope>
    <scope>SUBCELLULAR LOCATION</scope>
    <scope>TISSUE SPECIFICITY</scope>
</reference>
<reference key="24">
    <citation type="journal article" date="2013" name="Cardiovasc. Res.">
        <title>Slc26a6 functions as an electrogenic Cl-/HCO3- exchanger in cardiac myocytes.</title>
        <authorList>
            <person name="Kim H.J."/>
            <person name="Myers R."/>
            <person name="Sihn C.R."/>
            <person name="Rafizadeh S."/>
            <person name="Zhang X.D."/>
        </authorList>
    </citation>
    <scope>ALTERNATIVE SPLICING (ISOFORMS 1; 2; 4 AND 5)</scope>
    <scope>FUNCTION</scope>
    <scope>TRANSPORTER ACTIVITY (ISOFORMS 1; 2 AND 5)</scope>
    <scope>SUBCELLULAR LOCATION (ISOFORMS 1; 2; 4 AND 5)</scope>
    <scope>TISSUE SPECIFICITY (ISOFORMS 1; 2; 4 AND 5)</scope>
</reference>
<reference key="25">
    <citation type="journal article" date="2013" name="Gastroenterology">
        <title>Irbit mediates synergy between ca(2+) and cAMP signaling pathways during epithelial transport in mice.</title>
        <authorList>
            <person name="Park S."/>
            <person name="Shcheynikov N."/>
            <person name="Hong J.H."/>
            <person name="Zheng C."/>
            <person name="Suh S.H."/>
            <person name="Kawaai K."/>
            <person name="Ando H."/>
            <person name="Mizutani A."/>
            <person name="Abe T."/>
            <person name="Kiyonari H."/>
            <person name="Seki G."/>
            <person name="Yule D."/>
            <person name="Mikoshiba K."/>
            <person name="Muallem S."/>
        </authorList>
    </citation>
    <scope>INTERACTION WITH AHCYL1</scope>
</reference>
<reference key="26">
    <citation type="journal article" date="2016" name="Am. J. Physiol.">
        <title>N-glycosylation critically regulates function of oxalate transporter SLC26A6.</title>
        <authorList>
            <person name="Thomson R.B."/>
            <person name="Thomson C.L."/>
            <person name="Aronson P.S."/>
        </authorList>
    </citation>
    <scope>GLYCOSYLATION</scope>
</reference>
<reference key="27">
    <citation type="journal article" date="2018" name="J. Biol. Chem.">
        <title>The apical anion exchanger Slc26a6 promotes oxalate secretion by murine submandibular gland acinar cells.</title>
        <authorList>
            <person name="Mukaibo T."/>
            <person name="Munemasa T."/>
            <person name="George A.T."/>
            <person name="Tran D.T."/>
            <person name="Gao X."/>
            <person name="Herche J.L."/>
            <person name="Masaki C."/>
            <person name="Shull G.E."/>
            <person name="Soleimani M."/>
            <person name="Melvin J.E."/>
        </authorList>
    </citation>
    <scope>FUNCTION</scope>
    <scope>TRANSPORTER ACTIVITY</scope>
    <scope>SUBCELLULAR LOCATION</scope>
    <scope>TISSUE SPECIFICITY</scope>
</reference>
<comment type="function">
    <text evidence="6 7 10 11 12 13 15 16 17 18 19 20 21 22 24 26">Apical membrane anion-exchanger with wide epithelial distribution that plays a role as a component of the pH buffering system for maintaining acid-base homeostasis. Acts as a versatile DIDS-sensitive inorganic and organic anion transporter that mediates the uptake of monovalent anions like chloride, bicarbonate, formate and hydroxyl ion and divalent anions like sulfate and oxalate. Functions in multiple exchange modes involving pairs of these anions, which include chloride-bicarbonate, chloride-oxalate, oxalate-formate, oxalate-sulfate and chloride-formate exchange. Apical membrane chloride-bicarbonate exchanger that mediates luminal chloride absorption and bicarbonate secretion by the small intestinal brush border membrane and contributes to intracellular pH regulation in the duodenal upper villous epithelium during proton-coupled peptide absorption, possibly by providing a bicarbonate import pathway. Its association with carbonic anhydrase CA2 forms a bicarbonate transport metabolon; hence maximizes the local concentration of bicarbonate at the transporter site. Also mediates intestinal chloride absorption and oxalate secretion, thereby preventing hyperoxaluria and calcium oxalate urolithiasis. Transepithelial oxalate secretion, chloride-formate, chloride-oxalate and chloride-bicarbonate transport activities in the duodenum are inhibited by PKC activation in a calcium-independent manner. The apical membrane chloride-bicarbonate exchanger also provides a major route for fluid and bicarbonate secretion into the proximal tubules of the kidney as well as into the proximal part of the interlobular pancreatic ductal tree, where it mediates electrogenic chloride-bicarbonate exchange with a chloride-bicarbonate stoichiometry of 1:2, and hence will dilute and alkalinize protein-rich acinar secretion. Also mediates the transcellular sulfate absorption and oxalate secretion across the apical membrane in the duodenum and the formate ion efflux at the apical brush border of cells in the proximal tubules of kidney. Plays a role in sperm capacitation by increasing intracellular pH.</text>
</comment>
<comment type="function">
    <molecule>Isoform 2</molecule>
    <text evidence="5 8 9 14 24">Mediates electrogenic chloride-bicarbonate exchange with a chloride-bicarbonate stoichiometry of 1:2 (PubMed:12217875, PubMed:23933580). Also mediates exchange of chloride-formate and chloride-oxalate ions (PubMed:11459928, PubMed:12217875, PubMed:15203903, PubMed:17151144, PubMed:23933580). Mediates transcellular sulfate absorption (PubMed:12217875).</text>
</comment>
<comment type="catalytic activity">
    <reaction evidence="6 7 12 15 18 19 22 24 26">
        <text>2 hydrogencarbonate(in) + chloride(out) = 2 hydrogencarbonate(out) + chloride(in)</text>
        <dbReference type="Rhea" id="RHEA:72207"/>
        <dbReference type="ChEBI" id="CHEBI:17544"/>
        <dbReference type="ChEBI" id="CHEBI:17996"/>
    </reaction>
</comment>
<comment type="catalytic activity">
    <reaction evidence="7 10 11 21 24 26">
        <text>oxalate(in) + chloride(out) = oxalate(out) + chloride(in)</text>
        <dbReference type="Rhea" id="RHEA:72263"/>
        <dbReference type="ChEBI" id="CHEBI:17996"/>
        <dbReference type="ChEBI" id="CHEBI:30623"/>
    </reaction>
</comment>
<comment type="catalytic activity">
    <reaction evidence="7">
        <text>oxalate(in) + formate(out) = oxalate(out) + formate(in)</text>
        <dbReference type="Rhea" id="RHEA:72271"/>
        <dbReference type="ChEBI" id="CHEBI:15740"/>
        <dbReference type="ChEBI" id="CHEBI:30623"/>
    </reaction>
</comment>
<comment type="catalytic activity">
    <reaction evidence="7">
        <text>oxalate(in) + sulfate(out) = oxalate(out) + sulfate(in)</text>
        <dbReference type="Rhea" id="RHEA:72275"/>
        <dbReference type="ChEBI" id="CHEBI:16189"/>
        <dbReference type="ChEBI" id="CHEBI:30623"/>
    </reaction>
</comment>
<comment type="catalytic activity">
    <molecule>Isoform 2</molecule>
    <reaction evidence="8 24">
        <text>2 hydrogencarbonate(in) + chloride(out) = 2 hydrogencarbonate(out) + chloride(in)</text>
        <dbReference type="Rhea" id="RHEA:72207"/>
        <dbReference type="ChEBI" id="CHEBI:17544"/>
        <dbReference type="ChEBI" id="CHEBI:17996"/>
    </reaction>
</comment>
<comment type="catalytic activity">
    <molecule>Isoform 2</molecule>
    <reaction evidence="8 14 24">
        <text>oxalate(in) + chloride(out) = oxalate(out) + chloride(in)</text>
        <dbReference type="Rhea" id="RHEA:72263"/>
        <dbReference type="ChEBI" id="CHEBI:17996"/>
        <dbReference type="ChEBI" id="CHEBI:30623"/>
    </reaction>
</comment>
<comment type="catalytic activity">
    <molecule>Isoform 2</molecule>
    <reaction evidence="5 8 9 14">
        <text>formate(in) + chloride(out) = formate(out) + chloride(in)</text>
        <dbReference type="Rhea" id="RHEA:72267"/>
        <dbReference type="ChEBI" id="CHEBI:15740"/>
        <dbReference type="ChEBI" id="CHEBI:17996"/>
    </reaction>
</comment>
<comment type="catalytic activity">
    <molecule>Isoform 2</molecule>
    <reaction evidence="8">
        <text>sulfate(in) = sulfate(out)</text>
        <dbReference type="Rhea" id="RHEA:34983"/>
        <dbReference type="ChEBI" id="CHEBI:16189"/>
    </reaction>
    <physiologicalReaction direction="right-to-left" evidence="34">
        <dbReference type="Rhea" id="RHEA:34985"/>
    </physiologicalReaction>
</comment>
<comment type="catalytic activity">
    <molecule>Isoform 5</molecule>
    <reaction evidence="24">
        <text>2 hydrogencarbonate(in) + chloride(out) = 2 hydrogencarbonate(out) + chloride(in)</text>
        <dbReference type="Rhea" id="RHEA:72207"/>
        <dbReference type="ChEBI" id="CHEBI:17544"/>
        <dbReference type="ChEBI" id="CHEBI:17996"/>
    </reaction>
</comment>
<comment type="catalytic activity">
    <molecule>Isoform 5</molecule>
    <reaction evidence="24">
        <text>oxalate(in) + chloride(out) = oxalate(out) + chloride(in)</text>
        <dbReference type="Rhea" id="RHEA:72263"/>
        <dbReference type="ChEBI" id="CHEBI:17996"/>
        <dbReference type="ChEBI" id="CHEBI:30623"/>
    </reaction>
</comment>
<comment type="activity regulation">
    <text evidence="7 21 22">Apical membrane chloride-bicarbonate exchange activity of the pancreatic duct is inhibited by 4,4'-diisothiocyanatostilbene-2,2'-disulfonic acid (DIDS). Oxalate secretion in the duodenum and chloride-formate exchange activity is inhibited by DIDS.</text>
</comment>
<comment type="activity regulation">
    <molecule>Isoform 2</molecule>
    <text evidence="5 8 9">Chloride-formate exchange activity and transcellular sulfate absorption is inhibited by 4,4'-diisothiocyanatostilbene-2,2'-disulfonic acid (DIDS).</text>
</comment>
<comment type="biophysicochemical properties">
    <kinetics>
        <KM evidence="7">0.3 mM for oxalate</KM>
    </kinetics>
</comment>
<comment type="biophysicochemical properties">
    <molecule>Isoform 2</molecule>
    <kinetics>
        <KM evidence="9">3.87 mM for formate</KM>
    </kinetics>
</comment>
<comment type="subunit">
    <text evidence="10 20 23">Interacts (via C-terminal domain) with PDZK1 (via C-terminal PDZ domain); the interaction induces chloride and oxalate exchange transport (PubMed:16141316). Interacts with CFTR, SLC26A3 and NHERF1 (PubMed:21976599). Interacts with AHCYL1; the interaction increases SLC26A6 activity (PubMed:23542070).</text>
</comment>
<comment type="interaction">
    <interactant intactId="EBI-6895517">
        <id>Q8CIW6</id>
    </interactant>
    <interactant intactId="EBI-6115317">
        <id>P26361</id>
        <label>Cftr</label>
    </interactant>
    <organismsDiffer>false</organismsDiffer>
    <experiments>3</experiments>
</comment>
<comment type="interaction">
    <interactant intactId="EBI-6895517">
        <id>Q8CIW6</id>
    </interactant>
    <interactant intactId="EBI-1184085">
        <id>P70441</id>
        <label>Nherf1</label>
    </interactant>
    <organismsDiffer>false</organismsDiffer>
    <experiments>2</experiments>
</comment>
<comment type="interaction">
    <interactant intactId="EBI-6895517">
        <id>Q8CIW6</id>
    </interactant>
    <interactant intactId="EBI-6895537">
        <id>Q9WVC8</id>
        <label>Slc26a3</label>
    </interactant>
    <organismsDiffer>false</organismsDiffer>
    <experiments>2</experiments>
</comment>
<comment type="subcellular location">
    <subcellularLocation>
        <location evidence="20">Cell membrane</location>
        <topology evidence="2">Multi-pass membrane protein</topology>
    </subcellularLocation>
    <subcellularLocation>
        <location evidence="6 10 15 17 24 26">Apical cell membrane</location>
        <topology evidence="2">Multi-pass membrane protein</topology>
    </subcellularLocation>
    <subcellularLocation>
        <location evidence="11">Cytoplasmic vesicle membrane</location>
        <topology evidence="2">Multi-pass membrane protein</topology>
    </subcellularLocation>
    <subcellularLocation>
        <location evidence="10">Microsome</location>
    </subcellularLocation>
    <text evidence="5 6 10 20">Localized in sperm membranes. Colocalizes with CFTR at the midpiece of sperm tail. Localizes to the apical membrane brush border of epithelial cells in the proximal tubules of kidney, of enterocytes of the small intestine and of gastric parietal cells in the stomach.</text>
</comment>
<comment type="subcellular location">
    <molecule>Isoform 2</molecule>
    <subcellularLocation>
        <location evidence="14 24">Cell membrane</location>
        <topology evidence="2">Multi-pass membrane protein</topology>
    </subcellularLocation>
    <subcellularLocation>
        <location evidence="5">Apical cell membrane</location>
        <topology evidence="2">Multi-pass membrane protein</topology>
    </subcellularLocation>
</comment>
<comment type="subcellular location">
    <molecule>Isoform 4</molecule>
    <subcellularLocation>
        <location evidence="24">Cell membrane</location>
        <topology evidence="2">Multi-pass membrane protein</topology>
    </subcellularLocation>
</comment>
<comment type="subcellular location">
    <molecule>Isoform 5</molecule>
    <subcellularLocation>
        <location evidence="24">Cell membrane</location>
        <topology evidence="2">Multi-pass membrane protein</topology>
    </subcellularLocation>
</comment>
<comment type="alternative products">
    <event type="alternative splicing"/>
    <isoform>
        <id>Q8CIW6-1</id>
        <name>1</name>
        <name evidence="32">Slc26a6a</name>
        <sequence type="displayed"/>
    </isoform>
    <isoform>
        <id>Q8CIW6-2</id>
        <name>2</name>
        <name evidence="32">Slc26a6b</name>
        <sequence type="described" ref="VSP_047853"/>
    </isoform>
    <isoform>
        <id>Q8CIW6-3</id>
        <name>3</name>
        <sequence type="described" ref="VSP_047853 VSP_047854"/>
    </isoform>
    <isoform>
        <id>Q8CIW6-4</id>
        <name>4</name>
        <name evidence="32">Slc26a6c</name>
        <sequence type="described" ref="VSP_047853 VSP_061788"/>
    </isoform>
    <isoform>
        <id>Q8CIW6-5</id>
        <name>5</name>
        <name evidence="32">Slc26a6d</name>
        <sequence type="described" ref="VSP_047853 VSP_061789"/>
    </isoform>
</comment>
<comment type="tissue specificity">
    <text evidence="6 8 15 20 24 26">Expressed in kidney (at protein level). Expressed in spermatogenic cells. Expressed in intestine, kidney, testis, brain, muscle, heart, and stomach. Expressed in the submandibular and sublingual salivary glands.</text>
</comment>
<comment type="tissue specificity">
    <molecule>Isoform 2</molecule>
    <text evidence="5 24">Highly expressed in stomach, kidney, heart and small intestine, low in the lung, liver, testis, brain, skeletal muscle and colon.</text>
</comment>
<comment type="tissue specificity">
    <molecule>Isoform 4</molecule>
    <text evidence="24">Expressed in the heart.</text>
</comment>
<comment type="tissue specificity">
    <molecule>Isoform 5</molecule>
    <text evidence="24">Expressed in the heart.</text>
</comment>
<comment type="induction">
    <text evidence="17">Up-regulated by dietary fructose intake (at protein level).</text>
</comment>
<comment type="PTM">
    <text evidence="1 25">N-glycosylated (PubMed:27681177). Glycosylation at Asn-174 positively regulates its chloride oxalate exchanger activity (By similarity).</text>
</comment>
<comment type="disruption phenotype">
    <text evidence="11 13 17">Mice show an important decrease in salt absorption in the intestine and failed to develop hypertension on a high-fructose diet. Show a reduction in pancreatic duct fluid and bicarbonate secretion. Show enhanced oxalate absorption in the intestine leading to hyperoxalemia and hyperoxaluria with high incidence of calcium-oxalate stones formation.</text>
</comment>
<comment type="sequence caution" evidence="33">
    <conflict type="erroneous gene model prediction">
        <sequence resource="EMBL" id="AC168054"/>
    </conflict>
</comment>
<comment type="sequence caution" evidence="33">
    <conflict type="erroneous gene model prediction">
        <sequence resource="EMBL" id="CAAA01111125"/>
    </conflict>
</comment>
<comment type="sequence caution" evidence="33">
    <conflict type="erroneous gene model prediction">
        <sequence resource="EMBL" id="CAAA01200220"/>
    </conflict>
</comment>